<name>RADA_METST</name>
<evidence type="ECO:0000255" key="1">
    <source>
        <dbReference type="HAMAP-Rule" id="MF_00348"/>
    </source>
</evidence>
<keyword id="KW-0067">ATP-binding</keyword>
<keyword id="KW-0227">DNA damage</keyword>
<keyword id="KW-0233">DNA recombination</keyword>
<keyword id="KW-0238">DNA-binding</keyword>
<keyword id="KW-0547">Nucleotide-binding</keyword>
<keyword id="KW-1185">Reference proteome</keyword>
<sequence length="311" mass="34037">MTELEDLPSVGEKTAQKLRDAGFADMMRLATATPKELSVKVEIGEGVAAKVIEAARKAEKIDFETAFEVMERREDVGRITTGSKGLDELIGGGIETQSITEVYGEFGSGKSQISHELSVTTQLPVEEGGLDGEVVFIDTENTFRPERIEQIAEGFGLNIEEVLKKIHVARAFNSSHQILMADKINELIQSGVNIKLIIIDSLMAHFRAEYVGRESLATRQQKLNQHLHTLQTIANTYNVAVLITNQVQSKPDSFFGTPTKAVGGHVLGHASTYRILLKKGLSGKRIARLVDSPHLPEGESVFKVTTEGLVD</sequence>
<protein>
    <recommendedName>
        <fullName evidence="1">DNA repair and recombination protein RadA</fullName>
    </recommendedName>
</protein>
<feature type="chain" id="PRO_1000048391" description="DNA repair and recombination protein RadA">
    <location>
        <begin position="1"/>
        <end position="311"/>
    </location>
</feature>
<feature type="binding site" evidence="1">
    <location>
        <begin position="104"/>
        <end position="111"/>
    </location>
    <ligand>
        <name>ATP</name>
        <dbReference type="ChEBI" id="CHEBI:30616"/>
    </ligand>
</feature>
<comment type="function">
    <text evidence="1">Involved in DNA repair and in homologous recombination. Binds and assemble on single-stranded DNA to form a nucleoprotein filament. Hydrolyzes ATP in a ssDNA-dependent manner and promotes DNA strand exchange between homologous DNA molecules.</text>
</comment>
<comment type="similarity">
    <text evidence="1">Belongs to the eukaryotic RecA-like protein family.</text>
</comment>
<dbReference type="EMBL" id="CP000102">
    <property type="protein sequence ID" value="ABC57858.1"/>
    <property type="molecule type" value="Genomic_DNA"/>
</dbReference>
<dbReference type="RefSeq" id="WP_011407057.1">
    <property type="nucleotide sequence ID" value="NC_007681.1"/>
</dbReference>
<dbReference type="SMR" id="Q2NE95"/>
<dbReference type="STRING" id="339860.Msp_1488"/>
<dbReference type="GeneID" id="41326062"/>
<dbReference type="KEGG" id="mst:Msp_1488"/>
<dbReference type="eggNOG" id="arCOG00415">
    <property type="taxonomic scope" value="Archaea"/>
</dbReference>
<dbReference type="HOGENOM" id="CLU_041732_0_0_2"/>
<dbReference type="OrthoDB" id="31129at2157"/>
<dbReference type="Proteomes" id="UP000001931">
    <property type="component" value="Chromosome"/>
</dbReference>
<dbReference type="GO" id="GO:0005524">
    <property type="term" value="F:ATP binding"/>
    <property type="evidence" value="ECO:0007669"/>
    <property type="project" value="UniProtKB-UniRule"/>
</dbReference>
<dbReference type="GO" id="GO:0016887">
    <property type="term" value="F:ATP hydrolysis activity"/>
    <property type="evidence" value="ECO:0007669"/>
    <property type="project" value="InterPro"/>
</dbReference>
<dbReference type="GO" id="GO:0140664">
    <property type="term" value="F:ATP-dependent DNA damage sensor activity"/>
    <property type="evidence" value="ECO:0007669"/>
    <property type="project" value="InterPro"/>
</dbReference>
<dbReference type="GO" id="GO:0003684">
    <property type="term" value="F:damaged DNA binding"/>
    <property type="evidence" value="ECO:0007669"/>
    <property type="project" value="UniProtKB-UniRule"/>
</dbReference>
<dbReference type="GO" id="GO:0006310">
    <property type="term" value="P:DNA recombination"/>
    <property type="evidence" value="ECO:0007669"/>
    <property type="project" value="UniProtKB-UniRule"/>
</dbReference>
<dbReference type="GO" id="GO:0006281">
    <property type="term" value="P:DNA repair"/>
    <property type="evidence" value="ECO:0007669"/>
    <property type="project" value="UniProtKB-UniRule"/>
</dbReference>
<dbReference type="CDD" id="cd19515">
    <property type="entry name" value="archRadA"/>
    <property type="match status" value="1"/>
</dbReference>
<dbReference type="FunFam" id="3.40.50.300:FF:002052">
    <property type="entry name" value="DNA repair protein RAD51 homolog"/>
    <property type="match status" value="1"/>
</dbReference>
<dbReference type="Gene3D" id="1.10.150.20">
    <property type="entry name" value="5' to 3' exonuclease, C-terminal subdomain"/>
    <property type="match status" value="1"/>
</dbReference>
<dbReference type="Gene3D" id="3.40.50.300">
    <property type="entry name" value="P-loop containing nucleotide triphosphate hydrolases"/>
    <property type="match status" value="1"/>
</dbReference>
<dbReference type="HAMAP" id="MF_00348">
    <property type="entry name" value="RadA_arch"/>
    <property type="match status" value="1"/>
</dbReference>
<dbReference type="InterPro" id="IPR003593">
    <property type="entry name" value="AAA+_ATPase"/>
</dbReference>
<dbReference type="InterPro" id="IPR013632">
    <property type="entry name" value="DNA_recomb/repair_Rad51_C"/>
</dbReference>
<dbReference type="InterPro" id="IPR011938">
    <property type="entry name" value="DNA_recomb/repair_RadA"/>
</dbReference>
<dbReference type="InterPro" id="IPR016467">
    <property type="entry name" value="DNA_recomb/repair_RecA-like"/>
</dbReference>
<dbReference type="InterPro" id="IPR010995">
    <property type="entry name" value="DNA_repair_Rad51/TF_NusA_a-hlx"/>
</dbReference>
<dbReference type="InterPro" id="IPR027417">
    <property type="entry name" value="P-loop_NTPase"/>
</dbReference>
<dbReference type="InterPro" id="IPR020588">
    <property type="entry name" value="RecA_ATP-bd"/>
</dbReference>
<dbReference type="InterPro" id="IPR020587">
    <property type="entry name" value="RecA_monomer-monomer_interface"/>
</dbReference>
<dbReference type="NCBIfam" id="NF003301">
    <property type="entry name" value="PRK04301.1"/>
    <property type="match status" value="1"/>
</dbReference>
<dbReference type="NCBIfam" id="TIGR02236">
    <property type="entry name" value="recomb_radA"/>
    <property type="match status" value="1"/>
</dbReference>
<dbReference type="PANTHER" id="PTHR22942:SF30">
    <property type="entry name" value="MEIOTIC RECOMBINATION PROTEIN DMC1_LIM15 HOMOLOG"/>
    <property type="match status" value="1"/>
</dbReference>
<dbReference type="PANTHER" id="PTHR22942">
    <property type="entry name" value="RECA/RAD51/RADA DNA STRAND-PAIRING FAMILY MEMBER"/>
    <property type="match status" value="1"/>
</dbReference>
<dbReference type="Pfam" id="PF14520">
    <property type="entry name" value="HHH_5"/>
    <property type="match status" value="1"/>
</dbReference>
<dbReference type="Pfam" id="PF08423">
    <property type="entry name" value="Rad51"/>
    <property type="match status" value="1"/>
</dbReference>
<dbReference type="PIRSF" id="PIRSF005856">
    <property type="entry name" value="Rad51"/>
    <property type="match status" value="1"/>
</dbReference>
<dbReference type="SMART" id="SM00382">
    <property type="entry name" value="AAA"/>
    <property type="match status" value="1"/>
</dbReference>
<dbReference type="SUPFAM" id="SSF52540">
    <property type="entry name" value="P-loop containing nucleoside triphosphate hydrolases"/>
    <property type="match status" value="1"/>
</dbReference>
<dbReference type="SUPFAM" id="SSF47794">
    <property type="entry name" value="Rad51 N-terminal domain-like"/>
    <property type="match status" value="1"/>
</dbReference>
<dbReference type="PROSITE" id="PS50162">
    <property type="entry name" value="RECA_2"/>
    <property type="match status" value="1"/>
</dbReference>
<dbReference type="PROSITE" id="PS50163">
    <property type="entry name" value="RECA_3"/>
    <property type="match status" value="1"/>
</dbReference>
<accession>Q2NE95</accession>
<reference key="1">
    <citation type="journal article" date="2006" name="J. Bacteriol.">
        <title>The genome sequence of Methanosphaera stadtmanae reveals why this human intestinal archaeon is restricted to methanol and H2 for methane formation and ATP synthesis.</title>
        <authorList>
            <person name="Fricke W.F."/>
            <person name="Seedorf H."/>
            <person name="Henne A."/>
            <person name="Kruer M."/>
            <person name="Liesegang H."/>
            <person name="Hedderich R."/>
            <person name="Gottschalk G."/>
            <person name="Thauer R.K."/>
        </authorList>
    </citation>
    <scope>NUCLEOTIDE SEQUENCE [LARGE SCALE GENOMIC DNA]</scope>
    <source>
        <strain>ATCC 43021 / DSM 3091 / JCM 11832 / MCB-3</strain>
    </source>
</reference>
<proteinExistence type="inferred from homology"/>
<gene>
    <name evidence="1" type="primary">radA</name>
    <name type="ordered locus">Msp_1488</name>
</gene>
<organism>
    <name type="scientific">Methanosphaera stadtmanae (strain ATCC 43021 / DSM 3091 / JCM 11832 / MCB-3)</name>
    <dbReference type="NCBI Taxonomy" id="339860"/>
    <lineage>
        <taxon>Archaea</taxon>
        <taxon>Methanobacteriati</taxon>
        <taxon>Methanobacteriota</taxon>
        <taxon>Methanomada group</taxon>
        <taxon>Methanobacteria</taxon>
        <taxon>Methanobacteriales</taxon>
        <taxon>Methanobacteriaceae</taxon>
        <taxon>Methanosphaera</taxon>
    </lineage>
</organism>